<organism>
    <name type="scientific">Staphylococcus aureus (strain MW2)</name>
    <dbReference type="NCBI Taxonomy" id="196620"/>
    <lineage>
        <taxon>Bacteria</taxon>
        <taxon>Bacillati</taxon>
        <taxon>Bacillota</taxon>
        <taxon>Bacilli</taxon>
        <taxon>Bacillales</taxon>
        <taxon>Staphylococcaceae</taxon>
        <taxon>Staphylococcus</taxon>
    </lineage>
</organism>
<gene>
    <name type="primary">cidB</name>
    <name type="ordered locus">MW2461</name>
</gene>
<sequence length="229" mass="25012">MNDYVQALLMILLTVVLYYFAKRLQQKYPNPFLNPALIASLGIIFVLLIFGISYNGYMKGGSWINHILNATVVCLAYPLYKNREKIKDNVSIIFASVLTGVMLNFMLVFLTLKAFGYSKDVIVTLLPRSITAAVGIEVSHELGGTDTMTVLFIITTGLIGSILGSMLLRFGRFESSIAKGLTYGNASHAFGTAKALEMDIESGAFSSIGMILTAVISSVLIPVLILLFY</sequence>
<reference key="1">
    <citation type="journal article" date="2002" name="Lancet">
        <title>Genome and virulence determinants of high virulence community-acquired MRSA.</title>
        <authorList>
            <person name="Baba T."/>
            <person name="Takeuchi F."/>
            <person name="Kuroda M."/>
            <person name="Yuzawa H."/>
            <person name="Aoki K."/>
            <person name="Oguchi A."/>
            <person name="Nagai Y."/>
            <person name="Iwama N."/>
            <person name="Asano K."/>
            <person name="Naimi T."/>
            <person name="Kuroda H."/>
            <person name="Cui L."/>
            <person name="Yamamoto K."/>
            <person name="Hiramatsu K."/>
        </authorList>
    </citation>
    <scope>NUCLEOTIDE SEQUENCE [LARGE SCALE GENOMIC DNA]</scope>
    <source>
        <strain>MW2</strain>
    </source>
</reference>
<comment type="function">
    <text evidence="1">Increases the activity of extracellular murein hydrolases possibly by mediating their export via hole formation. Inhibited by the antiholin-like proteins LrgAB. In an unstressed cell, the LrgAB products probably inhibit the function of the CidAB proteins. When a cell is stressed by the addition of antibiotics or by other factors in the environment, the CidAB proteins possibly oligomerize within the bacterial cell membrane, creating lesions that disrupt the proton motive force, which in turn results in loss of cell viability. These lesions are also hypothesized to regulate the subsequent cell lysis by either allowing the murein hydrolases access to the cell wall substrate and/or regulating their activity by a possible change in the cell wall pH that results from loss of membrane potential (By similarity).</text>
</comment>
<comment type="subcellular location">
    <subcellularLocation>
        <location evidence="3">Cell membrane</location>
        <topology evidence="3">Multi-pass membrane protein</topology>
    </subcellularLocation>
</comment>
<comment type="similarity">
    <text evidence="3">Belongs to the CidB/LrgB family. CidB subfamily.</text>
</comment>
<evidence type="ECO:0000250" key="1"/>
<evidence type="ECO:0000255" key="2"/>
<evidence type="ECO:0000305" key="3"/>
<name>CIDB_STAAW</name>
<dbReference type="EMBL" id="BA000033">
    <property type="protein sequence ID" value="BAB96326.1"/>
    <property type="molecule type" value="Genomic_DNA"/>
</dbReference>
<dbReference type="RefSeq" id="WP_001001019.1">
    <property type="nucleotide sequence ID" value="NC_003923.1"/>
</dbReference>
<dbReference type="KEGG" id="sam:MW2461"/>
<dbReference type="HOGENOM" id="CLU_082099_3_0_9"/>
<dbReference type="GO" id="GO:0005886">
    <property type="term" value="C:plasma membrane"/>
    <property type="evidence" value="ECO:0007669"/>
    <property type="project" value="UniProtKB-SubCell"/>
</dbReference>
<dbReference type="GO" id="GO:0031640">
    <property type="term" value="P:killing of cells of another organism"/>
    <property type="evidence" value="ECO:0007669"/>
    <property type="project" value="UniProtKB-KW"/>
</dbReference>
<dbReference type="InterPro" id="IPR007300">
    <property type="entry name" value="CidB/LrgB"/>
</dbReference>
<dbReference type="PANTHER" id="PTHR30249:SF17">
    <property type="entry name" value="HOLIN-LIKE PROTEIN CIDB"/>
    <property type="match status" value="1"/>
</dbReference>
<dbReference type="PANTHER" id="PTHR30249">
    <property type="entry name" value="PUTATIVE SEROTONIN TRANSPORTER"/>
    <property type="match status" value="1"/>
</dbReference>
<dbReference type="Pfam" id="PF04172">
    <property type="entry name" value="LrgB"/>
    <property type="match status" value="1"/>
</dbReference>
<proteinExistence type="inferred from homology"/>
<protein>
    <recommendedName>
        <fullName>Holin-like protein CidB</fullName>
    </recommendedName>
</protein>
<feature type="chain" id="PRO_0000217050" description="Holin-like protein CidB">
    <location>
        <begin position="1"/>
        <end position="229"/>
    </location>
</feature>
<feature type="transmembrane region" description="Helical" evidence="2">
    <location>
        <begin position="4"/>
        <end position="21"/>
    </location>
</feature>
<feature type="transmembrane region" description="Helical" evidence="2">
    <location>
        <begin position="30"/>
        <end position="52"/>
    </location>
</feature>
<feature type="transmembrane region" description="Helical" evidence="2">
    <location>
        <begin position="62"/>
        <end position="79"/>
    </location>
</feature>
<feature type="transmembrane region" description="Helical" evidence="2">
    <location>
        <begin position="90"/>
        <end position="112"/>
    </location>
</feature>
<feature type="transmembrane region" description="Helical" evidence="2">
    <location>
        <begin position="149"/>
        <end position="171"/>
    </location>
</feature>
<feature type="transmembrane region" description="Helical" evidence="2">
    <location>
        <begin position="204"/>
        <end position="226"/>
    </location>
</feature>
<accession>P60640</accession>
<accession>Q99R95</accession>
<keyword id="KW-1003">Cell membrane</keyword>
<keyword id="KW-0204">Cytolysis</keyword>
<keyword id="KW-0472">Membrane</keyword>
<keyword id="KW-0812">Transmembrane</keyword>
<keyword id="KW-1133">Transmembrane helix</keyword>